<proteinExistence type="inferred from homology"/>
<comment type="function">
    <text evidence="1">Catalyzes the decarboxylation of orotidine 5'-monophosphate (OMP) to uridine 5'-monophosphate (UMP).</text>
</comment>
<comment type="catalytic activity">
    <reaction evidence="1">
        <text>orotidine 5'-phosphate + H(+) = UMP + CO2</text>
        <dbReference type="Rhea" id="RHEA:11596"/>
        <dbReference type="ChEBI" id="CHEBI:15378"/>
        <dbReference type="ChEBI" id="CHEBI:16526"/>
        <dbReference type="ChEBI" id="CHEBI:57538"/>
        <dbReference type="ChEBI" id="CHEBI:57865"/>
        <dbReference type="EC" id="4.1.1.23"/>
    </reaction>
</comment>
<comment type="pathway">
    <text evidence="1">Pyrimidine metabolism; UMP biosynthesis via de novo pathway; UMP from orotate: step 2/2.</text>
</comment>
<comment type="subunit">
    <text evidence="1">Homodimer.</text>
</comment>
<comment type="similarity">
    <text evidence="1">Belongs to the OMP decarboxylase family. Type 1 subfamily.</text>
</comment>
<protein>
    <recommendedName>
        <fullName evidence="1">Orotidine 5'-phosphate decarboxylase</fullName>
        <ecNumber evidence="1">4.1.1.23</ecNumber>
    </recommendedName>
    <alternativeName>
        <fullName evidence="1">OMP decarboxylase</fullName>
        <shortName evidence="1">OMPDCase</shortName>
        <shortName evidence="1">OMPdecase</shortName>
    </alternativeName>
</protein>
<gene>
    <name evidence="1" type="primary">pyrF</name>
    <name type="ordered locus">ABBFA_001901</name>
</gene>
<evidence type="ECO:0000255" key="1">
    <source>
        <dbReference type="HAMAP-Rule" id="MF_01200"/>
    </source>
</evidence>
<feature type="chain" id="PRO_1000138501" description="Orotidine 5'-phosphate decarboxylase">
    <location>
        <begin position="1"/>
        <end position="227"/>
    </location>
</feature>
<feature type="active site" description="Proton donor" evidence="1">
    <location>
        <position position="59"/>
    </location>
</feature>
<feature type="binding site" evidence="1">
    <location>
        <position position="8"/>
    </location>
    <ligand>
        <name>substrate</name>
    </ligand>
</feature>
<feature type="binding site" evidence="1">
    <location>
        <position position="30"/>
    </location>
    <ligand>
        <name>substrate</name>
    </ligand>
</feature>
<feature type="binding site" evidence="1">
    <location>
        <begin position="57"/>
        <end position="66"/>
    </location>
    <ligand>
        <name>substrate</name>
    </ligand>
</feature>
<feature type="binding site" evidence="1">
    <location>
        <position position="116"/>
    </location>
    <ligand>
        <name>substrate</name>
    </ligand>
</feature>
<feature type="binding site" evidence="1">
    <location>
        <position position="177"/>
    </location>
    <ligand>
        <name>substrate</name>
    </ligand>
</feature>
<feature type="binding site" evidence="1">
    <location>
        <position position="186"/>
    </location>
    <ligand>
        <name>substrate</name>
    </ligand>
</feature>
<feature type="binding site" evidence="1">
    <location>
        <position position="206"/>
    </location>
    <ligand>
        <name>substrate</name>
    </ligand>
</feature>
<feature type="binding site" evidence="1">
    <location>
        <position position="207"/>
    </location>
    <ligand>
        <name>substrate</name>
    </ligand>
</feature>
<sequence>MSIIVALDAKSQYDALKIVEQLDPTLCRVKVGKELFTHEGPSVVKKLQEENFEVFLDLKFHDIPNTTAQAVCAAADLGVWMVNVHASGGRKMMETCVERLKAGNYQTQLIAVTVLTSMGREDLKDIGLDIEPVEQVKRLAKLTKESGLDGVVCSAQEAKILRELIGQDFSLVTPGIRPEGSNADDQKRIVTPKQAMLDGSTHLVIGRPITNAENPTEMLKSILASIA</sequence>
<organism>
    <name type="scientific">Acinetobacter baumannii (strain AB307-0294)</name>
    <dbReference type="NCBI Taxonomy" id="557600"/>
    <lineage>
        <taxon>Bacteria</taxon>
        <taxon>Pseudomonadati</taxon>
        <taxon>Pseudomonadota</taxon>
        <taxon>Gammaproteobacteria</taxon>
        <taxon>Moraxellales</taxon>
        <taxon>Moraxellaceae</taxon>
        <taxon>Acinetobacter</taxon>
        <taxon>Acinetobacter calcoaceticus/baumannii complex</taxon>
    </lineage>
</organism>
<reference key="1">
    <citation type="journal article" date="2008" name="J. Bacteriol.">
        <title>Comparative genome sequence analysis of multidrug-resistant Acinetobacter baumannii.</title>
        <authorList>
            <person name="Adams M.D."/>
            <person name="Goglin K."/>
            <person name="Molyneaux N."/>
            <person name="Hujer K.M."/>
            <person name="Lavender H."/>
            <person name="Jamison J.J."/>
            <person name="MacDonald I.J."/>
            <person name="Martin K.M."/>
            <person name="Russo T."/>
            <person name="Campagnari A.A."/>
            <person name="Hujer A.M."/>
            <person name="Bonomo R.A."/>
            <person name="Gill S.R."/>
        </authorList>
    </citation>
    <scope>NUCLEOTIDE SEQUENCE [LARGE SCALE GENOMIC DNA]</scope>
    <source>
        <strain>AB307-0294</strain>
    </source>
</reference>
<dbReference type="EC" id="4.1.1.23" evidence="1"/>
<dbReference type="EMBL" id="CP001172">
    <property type="protein sequence ID" value="ACJ58220.1"/>
    <property type="molecule type" value="Genomic_DNA"/>
</dbReference>
<dbReference type="SMR" id="B7H3K6"/>
<dbReference type="HOGENOM" id="CLU_067069_0_0_6"/>
<dbReference type="UniPathway" id="UPA00070">
    <property type="reaction ID" value="UER00120"/>
</dbReference>
<dbReference type="Proteomes" id="UP000006924">
    <property type="component" value="Chromosome"/>
</dbReference>
<dbReference type="GO" id="GO:0005829">
    <property type="term" value="C:cytosol"/>
    <property type="evidence" value="ECO:0007669"/>
    <property type="project" value="TreeGrafter"/>
</dbReference>
<dbReference type="GO" id="GO:0004590">
    <property type="term" value="F:orotidine-5'-phosphate decarboxylase activity"/>
    <property type="evidence" value="ECO:0007669"/>
    <property type="project" value="UniProtKB-UniRule"/>
</dbReference>
<dbReference type="GO" id="GO:0006207">
    <property type="term" value="P:'de novo' pyrimidine nucleobase biosynthetic process"/>
    <property type="evidence" value="ECO:0007669"/>
    <property type="project" value="InterPro"/>
</dbReference>
<dbReference type="GO" id="GO:0044205">
    <property type="term" value="P:'de novo' UMP biosynthetic process"/>
    <property type="evidence" value="ECO:0007669"/>
    <property type="project" value="UniProtKB-UniRule"/>
</dbReference>
<dbReference type="CDD" id="cd04725">
    <property type="entry name" value="OMP_decarboxylase_like"/>
    <property type="match status" value="1"/>
</dbReference>
<dbReference type="FunFam" id="3.20.20.70:FF:000015">
    <property type="entry name" value="Orotidine 5'-phosphate decarboxylase"/>
    <property type="match status" value="1"/>
</dbReference>
<dbReference type="Gene3D" id="3.20.20.70">
    <property type="entry name" value="Aldolase class I"/>
    <property type="match status" value="1"/>
</dbReference>
<dbReference type="HAMAP" id="MF_01200_B">
    <property type="entry name" value="OMPdecase_type1_B"/>
    <property type="match status" value="1"/>
</dbReference>
<dbReference type="InterPro" id="IPR013785">
    <property type="entry name" value="Aldolase_TIM"/>
</dbReference>
<dbReference type="InterPro" id="IPR014732">
    <property type="entry name" value="OMPdecase"/>
</dbReference>
<dbReference type="InterPro" id="IPR018089">
    <property type="entry name" value="OMPdecase_AS"/>
</dbReference>
<dbReference type="InterPro" id="IPR047596">
    <property type="entry name" value="OMPdecase_bac"/>
</dbReference>
<dbReference type="InterPro" id="IPR001754">
    <property type="entry name" value="OMPdeCOase_dom"/>
</dbReference>
<dbReference type="InterPro" id="IPR011060">
    <property type="entry name" value="RibuloseP-bd_barrel"/>
</dbReference>
<dbReference type="NCBIfam" id="NF001273">
    <property type="entry name" value="PRK00230.1"/>
    <property type="match status" value="1"/>
</dbReference>
<dbReference type="NCBIfam" id="TIGR01740">
    <property type="entry name" value="pyrF"/>
    <property type="match status" value="1"/>
</dbReference>
<dbReference type="PANTHER" id="PTHR32119">
    <property type="entry name" value="OROTIDINE 5'-PHOSPHATE DECARBOXYLASE"/>
    <property type="match status" value="1"/>
</dbReference>
<dbReference type="PANTHER" id="PTHR32119:SF2">
    <property type="entry name" value="OROTIDINE 5'-PHOSPHATE DECARBOXYLASE"/>
    <property type="match status" value="1"/>
</dbReference>
<dbReference type="Pfam" id="PF00215">
    <property type="entry name" value="OMPdecase"/>
    <property type="match status" value="1"/>
</dbReference>
<dbReference type="SMART" id="SM00934">
    <property type="entry name" value="OMPdecase"/>
    <property type="match status" value="1"/>
</dbReference>
<dbReference type="SUPFAM" id="SSF51366">
    <property type="entry name" value="Ribulose-phoshate binding barrel"/>
    <property type="match status" value="1"/>
</dbReference>
<dbReference type="PROSITE" id="PS00156">
    <property type="entry name" value="OMPDECASE"/>
    <property type="match status" value="1"/>
</dbReference>
<name>PYRF_ACIB3</name>
<accession>B7H3K6</accession>
<keyword id="KW-0210">Decarboxylase</keyword>
<keyword id="KW-0456">Lyase</keyword>
<keyword id="KW-0665">Pyrimidine biosynthesis</keyword>